<name>SYK_BURCM</name>
<protein>
    <recommendedName>
        <fullName evidence="1">Lysine--tRNA ligase</fullName>
        <ecNumber evidence="1">6.1.1.6</ecNumber>
    </recommendedName>
    <alternativeName>
        <fullName evidence="1">Lysyl-tRNA synthetase</fullName>
        <shortName evidence="1">LysRS</shortName>
    </alternativeName>
</protein>
<gene>
    <name evidence="1" type="primary">lysS</name>
    <name type="ordered locus">Bamb_2155</name>
</gene>
<feature type="chain" id="PRO_1000012850" description="Lysine--tRNA ligase">
    <location>
        <begin position="1"/>
        <end position="508"/>
    </location>
</feature>
<feature type="binding site" evidence="1">
    <location>
        <position position="418"/>
    </location>
    <ligand>
        <name>Mg(2+)</name>
        <dbReference type="ChEBI" id="CHEBI:18420"/>
        <label>1</label>
    </ligand>
</feature>
<feature type="binding site" evidence="1">
    <location>
        <position position="425"/>
    </location>
    <ligand>
        <name>Mg(2+)</name>
        <dbReference type="ChEBI" id="CHEBI:18420"/>
        <label>1</label>
    </ligand>
</feature>
<feature type="binding site" evidence="1">
    <location>
        <position position="425"/>
    </location>
    <ligand>
        <name>Mg(2+)</name>
        <dbReference type="ChEBI" id="CHEBI:18420"/>
        <label>2</label>
    </ligand>
</feature>
<proteinExistence type="inferred from homology"/>
<dbReference type="EC" id="6.1.1.6" evidence="1"/>
<dbReference type="EMBL" id="CP000440">
    <property type="protein sequence ID" value="ABI87711.1"/>
    <property type="molecule type" value="Genomic_DNA"/>
</dbReference>
<dbReference type="RefSeq" id="WP_011657372.1">
    <property type="nucleotide sequence ID" value="NZ_CP009798.1"/>
</dbReference>
<dbReference type="SMR" id="Q0BDR2"/>
<dbReference type="GeneID" id="93085642"/>
<dbReference type="KEGG" id="bam:Bamb_2155"/>
<dbReference type="PATRIC" id="fig|339670.21.peg.2780"/>
<dbReference type="eggNOG" id="COG1190">
    <property type="taxonomic scope" value="Bacteria"/>
</dbReference>
<dbReference type="Proteomes" id="UP000000662">
    <property type="component" value="Chromosome 1"/>
</dbReference>
<dbReference type="GO" id="GO:0005829">
    <property type="term" value="C:cytosol"/>
    <property type="evidence" value="ECO:0007669"/>
    <property type="project" value="TreeGrafter"/>
</dbReference>
<dbReference type="GO" id="GO:0005524">
    <property type="term" value="F:ATP binding"/>
    <property type="evidence" value="ECO:0007669"/>
    <property type="project" value="UniProtKB-UniRule"/>
</dbReference>
<dbReference type="GO" id="GO:0004824">
    <property type="term" value="F:lysine-tRNA ligase activity"/>
    <property type="evidence" value="ECO:0007669"/>
    <property type="project" value="UniProtKB-UniRule"/>
</dbReference>
<dbReference type="GO" id="GO:0000287">
    <property type="term" value="F:magnesium ion binding"/>
    <property type="evidence" value="ECO:0007669"/>
    <property type="project" value="UniProtKB-UniRule"/>
</dbReference>
<dbReference type="GO" id="GO:0000049">
    <property type="term" value="F:tRNA binding"/>
    <property type="evidence" value="ECO:0007669"/>
    <property type="project" value="TreeGrafter"/>
</dbReference>
<dbReference type="GO" id="GO:0006430">
    <property type="term" value="P:lysyl-tRNA aminoacylation"/>
    <property type="evidence" value="ECO:0007669"/>
    <property type="project" value="UniProtKB-UniRule"/>
</dbReference>
<dbReference type="CDD" id="cd00775">
    <property type="entry name" value="LysRS_core"/>
    <property type="match status" value="1"/>
</dbReference>
<dbReference type="CDD" id="cd04322">
    <property type="entry name" value="LysRS_N"/>
    <property type="match status" value="1"/>
</dbReference>
<dbReference type="FunFam" id="2.40.50.140:FF:000024">
    <property type="entry name" value="Lysine--tRNA ligase"/>
    <property type="match status" value="1"/>
</dbReference>
<dbReference type="FunFam" id="3.30.930.10:FF:000001">
    <property type="entry name" value="Lysine--tRNA ligase"/>
    <property type="match status" value="1"/>
</dbReference>
<dbReference type="Gene3D" id="3.30.930.10">
    <property type="entry name" value="Bira Bifunctional Protein, Domain 2"/>
    <property type="match status" value="1"/>
</dbReference>
<dbReference type="Gene3D" id="2.40.50.140">
    <property type="entry name" value="Nucleic acid-binding proteins"/>
    <property type="match status" value="1"/>
</dbReference>
<dbReference type="HAMAP" id="MF_00252">
    <property type="entry name" value="Lys_tRNA_synth_class2"/>
    <property type="match status" value="1"/>
</dbReference>
<dbReference type="InterPro" id="IPR004364">
    <property type="entry name" value="Aa-tRNA-synt_II"/>
</dbReference>
<dbReference type="InterPro" id="IPR006195">
    <property type="entry name" value="aa-tRNA-synth_II"/>
</dbReference>
<dbReference type="InterPro" id="IPR045864">
    <property type="entry name" value="aa-tRNA-synth_II/BPL/LPL"/>
</dbReference>
<dbReference type="InterPro" id="IPR002313">
    <property type="entry name" value="Lys-tRNA-ligase_II"/>
</dbReference>
<dbReference type="InterPro" id="IPR044136">
    <property type="entry name" value="Lys-tRNA-ligase_II_N"/>
</dbReference>
<dbReference type="InterPro" id="IPR018149">
    <property type="entry name" value="Lys-tRNA-synth_II_C"/>
</dbReference>
<dbReference type="InterPro" id="IPR012340">
    <property type="entry name" value="NA-bd_OB-fold"/>
</dbReference>
<dbReference type="InterPro" id="IPR004365">
    <property type="entry name" value="NA-bd_OB_tRNA"/>
</dbReference>
<dbReference type="NCBIfam" id="TIGR00499">
    <property type="entry name" value="lysS_bact"/>
    <property type="match status" value="1"/>
</dbReference>
<dbReference type="NCBIfam" id="NF001756">
    <property type="entry name" value="PRK00484.1"/>
    <property type="match status" value="1"/>
</dbReference>
<dbReference type="PANTHER" id="PTHR42918:SF15">
    <property type="entry name" value="LYSINE--TRNA LIGASE, CHLOROPLASTIC_MITOCHONDRIAL"/>
    <property type="match status" value="1"/>
</dbReference>
<dbReference type="PANTHER" id="PTHR42918">
    <property type="entry name" value="LYSYL-TRNA SYNTHETASE"/>
    <property type="match status" value="1"/>
</dbReference>
<dbReference type="Pfam" id="PF00152">
    <property type="entry name" value="tRNA-synt_2"/>
    <property type="match status" value="1"/>
</dbReference>
<dbReference type="Pfam" id="PF01336">
    <property type="entry name" value="tRNA_anti-codon"/>
    <property type="match status" value="1"/>
</dbReference>
<dbReference type="PRINTS" id="PR00982">
    <property type="entry name" value="TRNASYNTHLYS"/>
</dbReference>
<dbReference type="SUPFAM" id="SSF55681">
    <property type="entry name" value="Class II aaRS and biotin synthetases"/>
    <property type="match status" value="1"/>
</dbReference>
<dbReference type="SUPFAM" id="SSF50249">
    <property type="entry name" value="Nucleic acid-binding proteins"/>
    <property type="match status" value="1"/>
</dbReference>
<dbReference type="PROSITE" id="PS50862">
    <property type="entry name" value="AA_TRNA_LIGASE_II"/>
    <property type="match status" value="1"/>
</dbReference>
<comment type="catalytic activity">
    <reaction evidence="1">
        <text>tRNA(Lys) + L-lysine + ATP = L-lysyl-tRNA(Lys) + AMP + diphosphate</text>
        <dbReference type="Rhea" id="RHEA:20792"/>
        <dbReference type="Rhea" id="RHEA-COMP:9696"/>
        <dbReference type="Rhea" id="RHEA-COMP:9697"/>
        <dbReference type="ChEBI" id="CHEBI:30616"/>
        <dbReference type="ChEBI" id="CHEBI:32551"/>
        <dbReference type="ChEBI" id="CHEBI:33019"/>
        <dbReference type="ChEBI" id="CHEBI:78442"/>
        <dbReference type="ChEBI" id="CHEBI:78529"/>
        <dbReference type="ChEBI" id="CHEBI:456215"/>
        <dbReference type="EC" id="6.1.1.6"/>
    </reaction>
</comment>
<comment type="cofactor">
    <cofactor evidence="1">
        <name>Mg(2+)</name>
        <dbReference type="ChEBI" id="CHEBI:18420"/>
    </cofactor>
    <text evidence="1">Binds 3 Mg(2+) ions per subunit.</text>
</comment>
<comment type="subunit">
    <text evidence="1">Homodimer.</text>
</comment>
<comment type="subcellular location">
    <subcellularLocation>
        <location evidence="1">Cytoplasm</location>
    </subcellularLocation>
</comment>
<comment type="similarity">
    <text evidence="1">Belongs to the class-II aminoacyl-tRNA synthetase family.</text>
</comment>
<sequence>MTEPTQTQPAVAADENQIIAERREKLRALREQGVAYPNDFRPTHHAADLQATFADSDKAALEANPVEVSVAGRMMLKRVMGKASFATVQDGSGQIQFFVTPNDVGAETYDAFKKWDLGDIVAARGVLFRTNKGELSVQCKELRLLSKALRPLPDKFHGLADQEMRYRQRYVDLIVTPETRDTFRARTRTIASIRKFMDNADFMEVETPMLHPIPGGAAAKPFVTHHNALDMQMFLRIAPELYLKRLIVGGFERVFEINRNFRNEGVSPRHNPEFTMMEFYAAYTDYRWLMDFTEQLIRQAAIDALGTATIQYQGRELDLAKPFHRLTITQAIQKYAPQYTDGQLSDDAFLRTELKRFGVDVSQPAFLNAGIGALQLALFEETAESQLWEPTYIIDYPVEVSPLARASDTTPGITERFELFMTGREIANGFSELNDPEDQAARFKKQVEQKDAGDEEAMFFDADYIRALEHGMPPTGGCGIGIDRLVMLLTDSPTIRDVLLFPHLRRED</sequence>
<accession>Q0BDR2</accession>
<keyword id="KW-0030">Aminoacyl-tRNA synthetase</keyword>
<keyword id="KW-0067">ATP-binding</keyword>
<keyword id="KW-0963">Cytoplasm</keyword>
<keyword id="KW-0436">Ligase</keyword>
<keyword id="KW-0460">Magnesium</keyword>
<keyword id="KW-0479">Metal-binding</keyword>
<keyword id="KW-0547">Nucleotide-binding</keyword>
<keyword id="KW-0648">Protein biosynthesis</keyword>
<evidence type="ECO:0000255" key="1">
    <source>
        <dbReference type="HAMAP-Rule" id="MF_00252"/>
    </source>
</evidence>
<organism>
    <name type="scientific">Burkholderia ambifaria (strain ATCC BAA-244 / DSM 16087 / CCUG 44356 / LMG 19182 / AMMD)</name>
    <name type="common">Burkholderia cepacia (strain AMMD)</name>
    <dbReference type="NCBI Taxonomy" id="339670"/>
    <lineage>
        <taxon>Bacteria</taxon>
        <taxon>Pseudomonadati</taxon>
        <taxon>Pseudomonadota</taxon>
        <taxon>Betaproteobacteria</taxon>
        <taxon>Burkholderiales</taxon>
        <taxon>Burkholderiaceae</taxon>
        <taxon>Burkholderia</taxon>
        <taxon>Burkholderia cepacia complex</taxon>
    </lineage>
</organism>
<reference key="1">
    <citation type="submission" date="2006-08" db="EMBL/GenBank/DDBJ databases">
        <title>Complete sequence of chromosome 1 of Burkholderia cepacia AMMD.</title>
        <authorList>
            <person name="Copeland A."/>
            <person name="Lucas S."/>
            <person name="Lapidus A."/>
            <person name="Barry K."/>
            <person name="Detter J.C."/>
            <person name="Glavina del Rio T."/>
            <person name="Hammon N."/>
            <person name="Israni S."/>
            <person name="Pitluck S."/>
            <person name="Bruce D."/>
            <person name="Chain P."/>
            <person name="Malfatti S."/>
            <person name="Shin M."/>
            <person name="Vergez L."/>
            <person name="Schmutz J."/>
            <person name="Larimer F."/>
            <person name="Land M."/>
            <person name="Hauser L."/>
            <person name="Kyrpides N."/>
            <person name="Kim E."/>
            <person name="Parke J."/>
            <person name="Coenye T."/>
            <person name="Konstantinidis K."/>
            <person name="Ramette A."/>
            <person name="Tiedje J."/>
            <person name="Richardson P."/>
        </authorList>
    </citation>
    <scope>NUCLEOTIDE SEQUENCE [LARGE SCALE GENOMIC DNA]</scope>
    <source>
        <strain>ATCC BAA-244 / DSM 16087 / CCUG 44356 / LMG 19182 / AMMD</strain>
    </source>
</reference>